<feature type="signal peptide" evidence="2">
    <location>
        <begin position="1"/>
        <end position="30"/>
    </location>
</feature>
<feature type="chain" id="PRO_0000251269" description="Glucan endo-1,3-beta-glucosidase 11">
    <location>
        <begin position="31"/>
        <end position="398"/>
    </location>
</feature>
<feature type="propeptide" id="PRO_0000251270" description="Removed in mature form" evidence="2">
    <location>
        <begin position="399"/>
        <end position="426"/>
    </location>
</feature>
<feature type="region of interest" description="Disordered" evidence="3">
    <location>
        <begin position="360"/>
        <end position="389"/>
    </location>
</feature>
<feature type="compositionally biased region" description="Gly residues" evidence="3">
    <location>
        <begin position="360"/>
        <end position="372"/>
    </location>
</feature>
<feature type="active site" description="Proton donor" evidence="1">
    <location>
        <position position="121"/>
    </location>
</feature>
<feature type="active site" description="Nucleophile" evidence="1">
    <location>
        <position position="266"/>
    </location>
</feature>
<feature type="lipid moiety-binding region" description="GPI-anchor amidated serine" evidence="2">
    <location>
        <position position="398"/>
    </location>
</feature>
<feature type="glycosylation site" description="N-linked (GlcNAc...) asparagine" evidence="2">
    <location>
        <position position="112"/>
    </location>
</feature>
<feature type="glycosylation site" description="N-linked (GlcNAc...) asparagine" evidence="2">
    <location>
        <position position="126"/>
    </location>
</feature>
<feature type="glycosylation site" description="N-linked (GlcNAc...) asparagine" evidence="2">
    <location>
        <position position="367"/>
    </location>
</feature>
<accession>Q8L868</accession>
<accession>Q9MAQ2</accession>
<keyword id="KW-1003">Cell membrane</keyword>
<keyword id="KW-0134">Cell wall</keyword>
<keyword id="KW-0961">Cell wall biogenesis/degradation</keyword>
<keyword id="KW-0325">Glycoprotein</keyword>
<keyword id="KW-0326">Glycosidase</keyword>
<keyword id="KW-0336">GPI-anchor</keyword>
<keyword id="KW-0378">Hydrolase</keyword>
<keyword id="KW-0449">Lipoprotein</keyword>
<keyword id="KW-0472">Membrane</keyword>
<keyword id="KW-0611">Plant defense</keyword>
<keyword id="KW-1185">Reference proteome</keyword>
<keyword id="KW-0964">Secreted</keyword>
<keyword id="KW-0732">Signal</keyword>
<organism>
    <name type="scientific">Arabidopsis thaliana</name>
    <name type="common">Mouse-ear cress</name>
    <dbReference type="NCBI Taxonomy" id="3702"/>
    <lineage>
        <taxon>Eukaryota</taxon>
        <taxon>Viridiplantae</taxon>
        <taxon>Streptophyta</taxon>
        <taxon>Embryophyta</taxon>
        <taxon>Tracheophyta</taxon>
        <taxon>Spermatophyta</taxon>
        <taxon>Magnoliopsida</taxon>
        <taxon>eudicotyledons</taxon>
        <taxon>Gunneridae</taxon>
        <taxon>Pentapetalae</taxon>
        <taxon>rosids</taxon>
        <taxon>malvids</taxon>
        <taxon>Brassicales</taxon>
        <taxon>Brassicaceae</taxon>
        <taxon>Camelineae</taxon>
        <taxon>Arabidopsis</taxon>
    </lineage>
</organism>
<evidence type="ECO:0000250" key="1">
    <source>
        <dbReference type="UniProtKB" id="O22317"/>
    </source>
</evidence>
<evidence type="ECO:0000255" key="2"/>
<evidence type="ECO:0000256" key="3">
    <source>
        <dbReference type="SAM" id="MobiDB-lite"/>
    </source>
</evidence>
<evidence type="ECO:0000305" key="4"/>
<proteinExistence type="evidence at transcript level"/>
<gene>
    <name type="ordered locus">At1g32860</name>
    <name type="ORF">F9L11.6</name>
</gene>
<name>E1311_ARATH</name>
<protein>
    <recommendedName>
        <fullName>Glucan endo-1,3-beta-glucosidase 11</fullName>
        <ecNumber>3.2.1.39</ecNumber>
    </recommendedName>
    <alternativeName>
        <fullName>(1-&gt;3)-beta-glucan endohydrolase 11</fullName>
        <shortName>(1-&gt;3)-beta-glucanase 11</shortName>
    </alternativeName>
    <alternativeName>
        <fullName>Beta-1,3-endoglucanase 11</fullName>
        <shortName>Beta-1,3-glucanase 11</shortName>
    </alternativeName>
</protein>
<sequence>MELTSFHRSSLLFLISLTLIILPTTTTSIGVNYGQIGDNLPSPTDVIPLIKSIGATKVKLYDANPQILKAFSNTGIEFIIGLGNEYLSKMKDPSKALTWIKQNVTPFLPATNITCITIGNEILALNDSSLTTNLLPAMQGVHSALITAGLSDQISVTTAHSLSILKSSFPPSAGEFQPDLLDSLTPILEFHRKTDSPFLINAYPFFAYKGNPKEVPLDFVLFQPNQGIVDPATGFHYDNMLFAQIDAVYSALAAAGFKSLRVEISETGWPSKGDDDEVGATPENAKRYNGNLIKMMMSGKKTKTPLKPNNDLSIYVFALFNENLKPGPTSERNYGLFKPDGTQAYSLGFALNDVVRGASGGGTGGGNSSSGGGRDKSPVFPVSPVAPDSASTGYLAISASPVTGKRKGKGAILSLVVSMLLARHLL</sequence>
<dbReference type="EC" id="3.2.1.39"/>
<dbReference type="EMBL" id="AC006424">
    <property type="protein sequence ID" value="AAF31288.1"/>
    <property type="status" value="ALT_SEQ"/>
    <property type="molecule type" value="Genomic_DNA"/>
</dbReference>
<dbReference type="EMBL" id="CP002684">
    <property type="protein sequence ID" value="AEE31533.1"/>
    <property type="molecule type" value="Genomic_DNA"/>
</dbReference>
<dbReference type="EMBL" id="AY120710">
    <property type="protein sequence ID" value="AAM53268.1"/>
    <property type="molecule type" value="mRNA"/>
</dbReference>
<dbReference type="EMBL" id="BT000048">
    <property type="protein sequence ID" value="AAN15367.1"/>
    <property type="molecule type" value="mRNA"/>
</dbReference>
<dbReference type="PIR" id="D86453">
    <property type="entry name" value="D86453"/>
</dbReference>
<dbReference type="RefSeq" id="NP_174563.2">
    <property type="nucleotide sequence ID" value="NM_103020.3"/>
</dbReference>
<dbReference type="SMR" id="Q8L868"/>
<dbReference type="FunCoup" id="Q8L868">
    <property type="interactions" value="26"/>
</dbReference>
<dbReference type="STRING" id="3702.Q8L868"/>
<dbReference type="CAZy" id="GH17">
    <property type="family name" value="Glycoside Hydrolase Family 17"/>
</dbReference>
<dbReference type="GlyGen" id="Q8L868">
    <property type="glycosylation" value="5 sites"/>
</dbReference>
<dbReference type="PaxDb" id="3702-AT1G32860.1"/>
<dbReference type="ProteomicsDB" id="222005"/>
<dbReference type="EnsemblPlants" id="AT1G32860.1">
    <property type="protein sequence ID" value="AT1G32860.1"/>
    <property type="gene ID" value="AT1G32860"/>
</dbReference>
<dbReference type="GeneID" id="840180"/>
<dbReference type="Gramene" id="AT1G32860.1">
    <property type="protein sequence ID" value="AT1G32860.1"/>
    <property type="gene ID" value="AT1G32860"/>
</dbReference>
<dbReference type="KEGG" id="ath:AT1G32860"/>
<dbReference type="Araport" id="AT1G32860"/>
<dbReference type="TAIR" id="AT1G32860"/>
<dbReference type="eggNOG" id="ENOG502QR6V">
    <property type="taxonomic scope" value="Eukaryota"/>
</dbReference>
<dbReference type="HOGENOM" id="CLU_024953_1_2_1"/>
<dbReference type="InParanoid" id="Q8L868"/>
<dbReference type="OMA" id="NCNLMKL"/>
<dbReference type="PhylomeDB" id="Q8L868"/>
<dbReference type="BioCyc" id="ARA:AT1G32860-MONOMER"/>
<dbReference type="PRO" id="PR:Q8L868"/>
<dbReference type="Proteomes" id="UP000006548">
    <property type="component" value="Chromosome 1"/>
</dbReference>
<dbReference type="ExpressionAtlas" id="Q8L868">
    <property type="expression patterns" value="baseline and differential"/>
</dbReference>
<dbReference type="GO" id="GO:0005576">
    <property type="term" value="C:extracellular region"/>
    <property type="evidence" value="ECO:0007669"/>
    <property type="project" value="UniProtKB-KW"/>
</dbReference>
<dbReference type="GO" id="GO:0005886">
    <property type="term" value="C:plasma membrane"/>
    <property type="evidence" value="ECO:0007669"/>
    <property type="project" value="UniProtKB-SubCell"/>
</dbReference>
<dbReference type="GO" id="GO:0098552">
    <property type="term" value="C:side of membrane"/>
    <property type="evidence" value="ECO:0007669"/>
    <property type="project" value="UniProtKB-KW"/>
</dbReference>
<dbReference type="GO" id="GO:0042973">
    <property type="term" value="F:glucan endo-1,3-beta-D-glucosidase activity"/>
    <property type="evidence" value="ECO:0007669"/>
    <property type="project" value="UniProtKB-EC"/>
</dbReference>
<dbReference type="GO" id="GO:0005975">
    <property type="term" value="P:carbohydrate metabolic process"/>
    <property type="evidence" value="ECO:0007669"/>
    <property type="project" value="InterPro"/>
</dbReference>
<dbReference type="GO" id="GO:0071555">
    <property type="term" value="P:cell wall organization"/>
    <property type="evidence" value="ECO:0007669"/>
    <property type="project" value="UniProtKB-KW"/>
</dbReference>
<dbReference type="GO" id="GO:0006952">
    <property type="term" value="P:defense response"/>
    <property type="evidence" value="ECO:0007669"/>
    <property type="project" value="UniProtKB-KW"/>
</dbReference>
<dbReference type="FunFam" id="3.20.20.80:FF:000005">
    <property type="entry name" value="Glucan endo-1,3-beta-glucosidase 14"/>
    <property type="match status" value="1"/>
</dbReference>
<dbReference type="Gene3D" id="3.20.20.80">
    <property type="entry name" value="Glycosidases"/>
    <property type="match status" value="1"/>
</dbReference>
<dbReference type="InterPro" id="IPR000490">
    <property type="entry name" value="Glyco_hydro_17"/>
</dbReference>
<dbReference type="InterPro" id="IPR044965">
    <property type="entry name" value="Glyco_hydro_17_plant"/>
</dbReference>
<dbReference type="InterPro" id="IPR017853">
    <property type="entry name" value="Glycoside_hydrolase_SF"/>
</dbReference>
<dbReference type="PANTHER" id="PTHR32227">
    <property type="entry name" value="GLUCAN ENDO-1,3-BETA-GLUCOSIDASE BG1-RELATED-RELATED"/>
    <property type="match status" value="1"/>
</dbReference>
<dbReference type="Pfam" id="PF00332">
    <property type="entry name" value="Glyco_hydro_17"/>
    <property type="match status" value="1"/>
</dbReference>
<dbReference type="SUPFAM" id="SSF51445">
    <property type="entry name" value="(Trans)glycosidases"/>
    <property type="match status" value="1"/>
</dbReference>
<reference key="1">
    <citation type="journal article" date="2000" name="Nature">
        <title>Sequence and analysis of chromosome 1 of the plant Arabidopsis thaliana.</title>
        <authorList>
            <person name="Theologis A."/>
            <person name="Ecker J.R."/>
            <person name="Palm C.J."/>
            <person name="Federspiel N.A."/>
            <person name="Kaul S."/>
            <person name="White O."/>
            <person name="Alonso J."/>
            <person name="Altafi H."/>
            <person name="Araujo R."/>
            <person name="Bowman C.L."/>
            <person name="Brooks S.Y."/>
            <person name="Buehler E."/>
            <person name="Chan A."/>
            <person name="Chao Q."/>
            <person name="Chen H."/>
            <person name="Cheuk R.F."/>
            <person name="Chin C.W."/>
            <person name="Chung M.K."/>
            <person name="Conn L."/>
            <person name="Conway A.B."/>
            <person name="Conway A.R."/>
            <person name="Creasy T.H."/>
            <person name="Dewar K."/>
            <person name="Dunn P."/>
            <person name="Etgu P."/>
            <person name="Feldblyum T.V."/>
            <person name="Feng J.-D."/>
            <person name="Fong B."/>
            <person name="Fujii C.Y."/>
            <person name="Gill J.E."/>
            <person name="Goldsmith A.D."/>
            <person name="Haas B."/>
            <person name="Hansen N.F."/>
            <person name="Hughes B."/>
            <person name="Huizar L."/>
            <person name="Hunter J.L."/>
            <person name="Jenkins J."/>
            <person name="Johnson-Hopson C."/>
            <person name="Khan S."/>
            <person name="Khaykin E."/>
            <person name="Kim C.J."/>
            <person name="Koo H.L."/>
            <person name="Kremenetskaia I."/>
            <person name="Kurtz D.B."/>
            <person name="Kwan A."/>
            <person name="Lam B."/>
            <person name="Langin-Hooper S."/>
            <person name="Lee A."/>
            <person name="Lee J.M."/>
            <person name="Lenz C.A."/>
            <person name="Li J.H."/>
            <person name="Li Y.-P."/>
            <person name="Lin X."/>
            <person name="Liu S.X."/>
            <person name="Liu Z.A."/>
            <person name="Luros J.S."/>
            <person name="Maiti R."/>
            <person name="Marziali A."/>
            <person name="Militscher J."/>
            <person name="Miranda M."/>
            <person name="Nguyen M."/>
            <person name="Nierman W.C."/>
            <person name="Osborne B.I."/>
            <person name="Pai G."/>
            <person name="Peterson J."/>
            <person name="Pham P.K."/>
            <person name="Rizzo M."/>
            <person name="Rooney T."/>
            <person name="Rowley D."/>
            <person name="Sakano H."/>
            <person name="Salzberg S.L."/>
            <person name="Schwartz J.R."/>
            <person name="Shinn P."/>
            <person name="Southwick A.M."/>
            <person name="Sun H."/>
            <person name="Tallon L.J."/>
            <person name="Tambunga G."/>
            <person name="Toriumi M.J."/>
            <person name="Town C.D."/>
            <person name="Utterback T."/>
            <person name="Van Aken S."/>
            <person name="Vaysberg M."/>
            <person name="Vysotskaia V.S."/>
            <person name="Walker M."/>
            <person name="Wu D."/>
            <person name="Yu G."/>
            <person name="Fraser C.M."/>
            <person name="Venter J.C."/>
            <person name="Davis R.W."/>
        </authorList>
    </citation>
    <scope>NUCLEOTIDE SEQUENCE [LARGE SCALE GENOMIC DNA]</scope>
    <source>
        <strain>cv. Columbia</strain>
    </source>
</reference>
<reference key="2">
    <citation type="journal article" date="2017" name="Plant J.">
        <title>Araport11: a complete reannotation of the Arabidopsis thaliana reference genome.</title>
        <authorList>
            <person name="Cheng C.Y."/>
            <person name="Krishnakumar V."/>
            <person name="Chan A.P."/>
            <person name="Thibaud-Nissen F."/>
            <person name="Schobel S."/>
            <person name="Town C.D."/>
        </authorList>
    </citation>
    <scope>GENOME REANNOTATION</scope>
    <source>
        <strain>cv. Columbia</strain>
    </source>
</reference>
<reference key="3">
    <citation type="journal article" date="2003" name="Science">
        <title>Empirical analysis of transcriptional activity in the Arabidopsis genome.</title>
        <authorList>
            <person name="Yamada K."/>
            <person name="Lim J."/>
            <person name="Dale J.M."/>
            <person name="Chen H."/>
            <person name="Shinn P."/>
            <person name="Palm C.J."/>
            <person name="Southwick A.M."/>
            <person name="Wu H.C."/>
            <person name="Kim C.J."/>
            <person name="Nguyen M."/>
            <person name="Pham P.K."/>
            <person name="Cheuk R.F."/>
            <person name="Karlin-Newmann G."/>
            <person name="Liu S.X."/>
            <person name="Lam B."/>
            <person name="Sakano H."/>
            <person name="Wu T."/>
            <person name="Yu G."/>
            <person name="Miranda M."/>
            <person name="Quach H.L."/>
            <person name="Tripp M."/>
            <person name="Chang C.H."/>
            <person name="Lee J.M."/>
            <person name="Toriumi M.J."/>
            <person name="Chan M.M."/>
            <person name="Tang C.C."/>
            <person name="Onodera C.S."/>
            <person name="Deng J.M."/>
            <person name="Akiyama K."/>
            <person name="Ansari Y."/>
            <person name="Arakawa T."/>
            <person name="Banh J."/>
            <person name="Banno F."/>
            <person name="Bowser L."/>
            <person name="Brooks S.Y."/>
            <person name="Carninci P."/>
            <person name="Chao Q."/>
            <person name="Choy N."/>
            <person name="Enju A."/>
            <person name="Goldsmith A.D."/>
            <person name="Gurjal M."/>
            <person name="Hansen N.F."/>
            <person name="Hayashizaki Y."/>
            <person name="Johnson-Hopson C."/>
            <person name="Hsuan V.W."/>
            <person name="Iida K."/>
            <person name="Karnes M."/>
            <person name="Khan S."/>
            <person name="Koesema E."/>
            <person name="Ishida J."/>
            <person name="Jiang P.X."/>
            <person name="Jones T."/>
            <person name="Kawai J."/>
            <person name="Kamiya A."/>
            <person name="Meyers C."/>
            <person name="Nakajima M."/>
            <person name="Narusaka M."/>
            <person name="Seki M."/>
            <person name="Sakurai T."/>
            <person name="Satou M."/>
            <person name="Tamse R."/>
            <person name="Vaysberg M."/>
            <person name="Wallender E.K."/>
            <person name="Wong C."/>
            <person name="Yamamura Y."/>
            <person name="Yuan S."/>
            <person name="Shinozaki K."/>
            <person name="Davis R.W."/>
            <person name="Theologis A."/>
            <person name="Ecker J.R."/>
        </authorList>
    </citation>
    <scope>NUCLEOTIDE SEQUENCE [LARGE SCALE MRNA]</scope>
    <source>
        <strain>cv. Columbia</strain>
    </source>
</reference>
<comment type="catalytic activity">
    <reaction>
        <text>Hydrolysis of (1-&gt;3)-beta-D-glucosidic linkages in (1-&gt;3)-beta-D-glucans.</text>
        <dbReference type="EC" id="3.2.1.39"/>
    </reaction>
</comment>
<comment type="subcellular location">
    <subcellularLocation>
        <location evidence="4">Secreted</location>
        <location evidence="4">Cell wall</location>
    </subcellularLocation>
    <subcellularLocation>
        <location>Cell membrane</location>
        <topology>Lipid-anchor</topology>
        <topology>GPI-anchor</topology>
        <orientation>Extracellular side</orientation>
    </subcellularLocation>
</comment>
<comment type="similarity">
    <text evidence="4">Belongs to the glycosyl hydrolase 17 family.</text>
</comment>
<comment type="sequence caution" evidence="4">
    <conflict type="erroneous gene model prediction">
        <sequence resource="EMBL-CDS" id="AAF31288"/>
    </conflict>
</comment>